<dbReference type="EC" id="3.2.2.27" evidence="1"/>
<dbReference type="EMBL" id="CP000266">
    <property type="protein sequence ID" value="ABF04739.1"/>
    <property type="molecule type" value="Genomic_DNA"/>
</dbReference>
<dbReference type="RefSeq" id="WP_001262715.1">
    <property type="nucleotide sequence ID" value="NC_008258.1"/>
</dbReference>
<dbReference type="SMR" id="Q0T1S6"/>
<dbReference type="KEGG" id="sfv:SFV_2643"/>
<dbReference type="HOGENOM" id="CLU_032162_3_1_6"/>
<dbReference type="Proteomes" id="UP000000659">
    <property type="component" value="Chromosome"/>
</dbReference>
<dbReference type="GO" id="GO:0005737">
    <property type="term" value="C:cytoplasm"/>
    <property type="evidence" value="ECO:0007669"/>
    <property type="project" value="UniProtKB-SubCell"/>
</dbReference>
<dbReference type="GO" id="GO:0004844">
    <property type="term" value="F:uracil DNA N-glycosylase activity"/>
    <property type="evidence" value="ECO:0007669"/>
    <property type="project" value="UniProtKB-UniRule"/>
</dbReference>
<dbReference type="GO" id="GO:0097510">
    <property type="term" value="P:base-excision repair, AP site formation via deaminated base removal"/>
    <property type="evidence" value="ECO:0007669"/>
    <property type="project" value="TreeGrafter"/>
</dbReference>
<dbReference type="CDD" id="cd10027">
    <property type="entry name" value="UDG-F1-like"/>
    <property type="match status" value="1"/>
</dbReference>
<dbReference type="FunFam" id="3.40.470.10:FF:000001">
    <property type="entry name" value="Uracil-DNA glycosylase"/>
    <property type="match status" value="1"/>
</dbReference>
<dbReference type="Gene3D" id="3.40.470.10">
    <property type="entry name" value="Uracil-DNA glycosylase-like domain"/>
    <property type="match status" value="1"/>
</dbReference>
<dbReference type="HAMAP" id="MF_00148">
    <property type="entry name" value="UDG"/>
    <property type="match status" value="1"/>
</dbReference>
<dbReference type="InterPro" id="IPR002043">
    <property type="entry name" value="UDG_fam1"/>
</dbReference>
<dbReference type="InterPro" id="IPR018085">
    <property type="entry name" value="Ura-DNA_Glyclase_AS"/>
</dbReference>
<dbReference type="InterPro" id="IPR005122">
    <property type="entry name" value="Uracil-DNA_glycosylase-like"/>
</dbReference>
<dbReference type="InterPro" id="IPR036895">
    <property type="entry name" value="Uracil-DNA_glycosylase-like_sf"/>
</dbReference>
<dbReference type="NCBIfam" id="NF003588">
    <property type="entry name" value="PRK05254.1-1"/>
    <property type="match status" value="1"/>
</dbReference>
<dbReference type="NCBIfam" id="NF003589">
    <property type="entry name" value="PRK05254.1-2"/>
    <property type="match status" value="1"/>
</dbReference>
<dbReference type="NCBIfam" id="NF003591">
    <property type="entry name" value="PRK05254.1-4"/>
    <property type="match status" value="1"/>
</dbReference>
<dbReference type="NCBIfam" id="NF003592">
    <property type="entry name" value="PRK05254.1-5"/>
    <property type="match status" value="1"/>
</dbReference>
<dbReference type="NCBIfam" id="TIGR00628">
    <property type="entry name" value="ung"/>
    <property type="match status" value="1"/>
</dbReference>
<dbReference type="PANTHER" id="PTHR11264">
    <property type="entry name" value="URACIL-DNA GLYCOSYLASE"/>
    <property type="match status" value="1"/>
</dbReference>
<dbReference type="PANTHER" id="PTHR11264:SF0">
    <property type="entry name" value="URACIL-DNA GLYCOSYLASE"/>
    <property type="match status" value="1"/>
</dbReference>
<dbReference type="Pfam" id="PF03167">
    <property type="entry name" value="UDG"/>
    <property type="match status" value="1"/>
</dbReference>
<dbReference type="SMART" id="SM00986">
    <property type="entry name" value="UDG"/>
    <property type="match status" value="1"/>
</dbReference>
<dbReference type="SMART" id="SM00987">
    <property type="entry name" value="UreE_C"/>
    <property type="match status" value="1"/>
</dbReference>
<dbReference type="SUPFAM" id="SSF52141">
    <property type="entry name" value="Uracil-DNA glycosylase-like"/>
    <property type="match status" value="1"/>
</dbReference>
<dbReference type="PROSITE" id="PS00130">
    <property type="entry name" value="U_DNA_GLYCOSYLASE"/>
    <property type="match status" value="1"/>
</dbReference>
<gene>
    <name evidence="1" type="primary">ung</name>
    <name type="ordered locus">SFV_2643</name>
</gene>
<evidence type="ECO:0000255" key="1">
    <source>
        <dbReference type="HAMAP-Rule" id="MF_00148"/>
    </source>
</evidence>
<proteinExistence type="inferred from homology"/>
<reference key="1">
    <citation type="journal article" date="2006" name="BMC Genomics">
        <title>Complete genome sequence of Shigella flexneri 5b and comparison with Shigella flexneri 2a.</title>
        <authorList>
            <person name="Nie H."/>
            <person name="Yang F."/>
            <person name="Zhang X."/>
            <person name="Yang J."/>
            <person name="Chen L."/>
            <person name="Wang J."/>
            <person name="Xiong Z."/>
            <person name="Peng J."/>
            <person name="Sun L."/>
            <person name="Dong J."/>
            <person name="Xue Y."/>
            <person name="Xu X."/>
            <person name="Chen S."/>
            <person name="Yao Z."/>
            <person name="Shen Y."/>
            <person name="Jin Q."/>
        </authorList>
    </citation>
    <scope>NUCLEOTIDE SEQUENCE [LARGE SCALE GENOMIC DNA]</scope>
    <source>
        <strain>8401</strain>
    </source>
</reference>
<name>UNG_SHIF8</name>
<comment type="function">
    <text evidence="1">Excises uracil residues from the DNA which can arise as a result of misincorporation of dUMP residues by DNA polymerase or due to deamination of cytosine.</text>
</comment>
<comment type="catalytic activity">
    <reaction evidence="1">
        <text>Hydrolyzes single-stranded DNA or mismatched double-stranded DNA and polynucleotides, releasing free uracil.</text>
        <dbReference type="EC" id="3.2.2.27"/>
    </reaction>
</comment>
<comment type="subcellular location">
    <subcellularLocation>
        <location evidence="1">Cytoplasm</location>
    </subcellularLocation>
</comment>
<comment type="similarity">
    <text evidence="1">Belongs to the uracil-DNA glycosylase (UDG) superfamily. UNG family.</text>
</comment>
<accession>Q0T1S6</accession>
<feature type="chain" id="PRO_1000009939" description="Uracil-DNA glycosylase">
    <location>
        <begin position="1"/>
        <end position="229"/>
    </location>
</feature>
<feature type="active site" description="Proton acceptor" evidence="1">
    <location>
        <position position="64"/>
    </location>
</feature>
<keyword id="KW-0963">Cytoplasm</keyword>
<keyword id="KW-0227">DNA damage</keyword>
<keyword id="KW-0234">DNA repair</keyword>
<keyword id="KW-0378">Hydrolase</keyword>
<protein>
    <recommendedName>
        <fullName evidence="1">Uracil-DNA glycosylase</fullName>
        <shortName evidence="1">UDG</shortName>
        <ecNumber evidence="1">3.2.2.27</ecNumber>
    </recommendedName>
</protein>
<organism>
    <name type="scientific">Shigella flexneri serotype 5b (strain 8401)</name>
    <dbReference type="NCBI Taxonomy" id="373384"/>
    <lineage>
        <taxon>Bacteria</taxon>
        <taxon>Pseudomonadati</taxon>
        <taxon>Pseudomonadota</taxon>
        <taxon>Gammaproteobacteria</taxon>
        <taxon>Enterobacterales</taxon>
        <taxon>Enterobacteriaceae</taxon>
        <taxon>Shigella</taxon>
    </lineage>
</organism>
<sequence>MANELTWHDVLAEEKQQPYFLNTLQTVASERQSGVTIYPPQKDVFNAFRFTELGDVKVVILGQDPYHGPGQAHGLAFSVRPGIAIPPSLLNMYKELENTIPGFTRPNHGYLESWARQGVLLLNTVLTVRAGQAHSHASLGWETFTDKVISLINQHREGVVFLLWGSHAQKKGAIIDKQRHHVLKAPHPSPLSAHRGFFGCNHFVLANQWLEQRGETPIDWMPVLPAECE</sequence>